<proteinExistence type="inferred from homology"/>
<feature type="chain" id="PRO_0000146203" description="Small ribosomal subunit protein uS12">
    <location>
        <begin position="1"/>
        <end position="123"/>
    </location>
</feature>
<feature type="region of interest" description="Disordered" evidence="3">
    <location>
        <begin position="1"/>
        <end position="29"/>
    </location>
</feature>
<feature type="compositionally biased region" description="Basic residues" evidence="3">
    <location>
        <begin position="8"/>
        <end position="21"/>
    </location>
</feature>
<feature type="modified residue" description="3-methylthioaspartic acid" evidence="1">
    <location>
        <position position="89"/>
    </location>
</feature>
<organism>
    <name type="scientific">Chlamydia caviae (strain ATCC VR-813 / DSM 19441 / 03DC25 / GPIC)</name>
    <name type="common">Chlamydophila caviae</name>
    <dbReference type="NCBI Taxonomy" id="227941"/>
    <lineage>
        <taxon>Bacteria</taxon>
        <taxon>Pseudomonadati</taxon>
        <taxon>Chlamydiota</taxon>
        <taxon>Chlamydiia</taxon>
        <taxon>Chlamydiales</taxon>
        <taxon>Chlamydiaceae</taxon>
        <taxon>Chlamydia/Chlamydophila group</taxon>
        <taxon>Chlamydia</taxon>
    </lineage>
</organism>
<sequence>MPTINQLIRKKRQSSASRKKSPALQKCPQRRGVCLQVKTKTPKKPNSALRKVAWVRLSNGQEVIAYIGGEGHNLQEHSIVLVQGGRVKDLPGVRYHIVRGALDCAAVKNRKQSRSRYGAKRPK</sequence>
<accession>Q824G2</accession>
<protein>
    <recommendedName>
        <fullName evidence="2">Small ribosomal subunit protein uS12</fullName>
    </recommendedName>
    <alternativeName>
        <fullName evidence="4">30S ribosomal protein S12</fullName>
    </alternativeName>
</protein>
<reference key="1">
    <citation type="journal article" date="2003" name="Nucleic Acids Res.">
        <title>Genome sequence of Chlamydophila caviae (Chlamydia psittaci GPIC): examining the role of niche-specific genes in the evolution of the Chlamydiaceae.</title>
        <authorList>
            <person name="Read T.D."/>
            <person name="Myers G.S.A."/>
            <person name="Brunham R.C."/>
            <person name="Nelson W.C."/>
            <person name="Paulsen I.T."/>
            <person name="Heidelberg J.F."/>
            <person name="Holtzapple E.K."/>
            <person name="Khouri H.M."/>
            <person name="Federova N.B."/>
            <person name="Carty H.A."/>
            <person name="Umayam L.A."/>
            <person name="Haft D.H."/>
            <person name="Peterson J.D."/>
            <person name="Beanan M.J."/>
            <person name="White O."/>
            <person name="Salzberg S.L."/>
            <person name="Hsia R.-C."/>
            <person name="McClarty G."/>
            <person name="Rank R.G."/>
            <person name="Bavoil P.M."/>
            <person name="Fraser C.M."/>
        </authorList>
    </citation>
    <scope>NUCLEOTIDE SEQUENCE [LARGE SCALE GENOMIC DNA]</scope>
    <source>
        <strain>ATCC VR-813 / DSM 19441 / 03DC25 / GPIC</strain>
    </source>
</reference>
<gene>
    <name evidence="2" type="primary">rpsL</name>
    <name type="ordered locus">CCA_00190</name>
</gene>
<keyword id="KW-0488">Methylation</keyword>
<keyword id="KW-0687">Ribonucleoprotein</keyword>
<keyword id="KW-0689">Ribosomal protein</keyword>
<keyword id="KW-0694">RNA-binding</keyword>
<keyword id="KW-0699">rRNA-binding</keyword>
<keyword id="KW-0820">tRNA-binding</keyword>
<comment type="function">
    <text evidence="2">With S4 and S5 plays an important role in translational accuracy.</text>
</comment>
<comment type="function">
    <text evidence="2">Interacts with and stabilizes bases of the 16S rRNA that are involved in tRNA selection in the A site and with the mRNA backbone. Located at the interface of the 30S and 50S subunits, it traverses the body of the 30S subunit contacting proteins on the other side and probably holding the rRNA structure together. The combined cluster of proteins S8, S12 and S17 appears to hold together the shoulder and platform of the 30S subunit.</text>
</comment>
<comment type="subunit">
    <text evidence="2">Part of the 30S ribosomal subunit. Contacts proteins S8 and S17. May interact with IF1 in the 30S initiation complex.</text>
</comment>
<comment type="similarity">
    <text evidence="2">Belongs to the universal ribosomal protein uS12 family.</text>
</comment>
<evidence type="ECO:0000250" key="1"/>
<evidence type="ECO:0000255" key="2">
    <source>
        <dbReference type="HAMAP-Rule" id="MF_00403"/>
    </source>
</evidence>
<evidence type="ECO:0000256" key="3">
    <source>
        <dbReference type="SAM" id="MobiDB-lite"/>
    </source>
</evidence>
<evidence type="ECO:0000305" key="4"/>
<name>RS12_CHLCV</name>
<dbReference type="EMBL" id="AE015925">
    <property type="protein sequence ID" value="AAP04941.1"/>
    <property type="molecule type" value="Genomic_DNA"/>
</dbReference>
<dbReference type="RefSeq" id="WP_006342868.1">
    <property type="nucleotide sequence ID" value="NC_003361.3"/>
</dbReference>
<dbReference type="SMR" id="Q824G2"/>
<dbReference type="STRING" id="227941.CCA_00190"/>
<dbReference type="GeneID" id="93024742"/>
<dbReference type="KEGG" id="cca:CCA_00190"/>
<dbReference type="eggNOG" id="COG0048">
    <property type="taxonomic scope" value="Bacteria"/>
</dbReference>
<dbReference type="HOGENOM" id="CLU_104295_1_2_0"/>
<dbReference type="OrthoDB" id="9802366at2"/>
<dbReference type="Proteomes" id="UP000002193">
    <property type="component" value="Chromosome"/>
</dbReference>
<dbReference type="GO" id="GO:0015935">
    <property type="term" value="C:small ribosomal subunit"/>
    <property type="evidence" value="ECO:0007669"/>
    <property type="project" value="InterPro"/>
</dbReference>
<dbReference type="GO" id="GO:0019843">
    <property type="term" value="F:rRNA binding"/>
    <property type="evidence" value="ECO:0007669"/>
    <property type="project" value="UniProtKB-UniRule"/>
</dbReference>
<dbReference type="GO" id="GO:0003735">
    <property type="term" value="F:structural constituent of ribosome"/>
    <property type="evidence" value="ECO:0007669"/>
    <property type="project" value="InterPro"/>
</dbReference>
<dbReference type="GO" id="GO:0000049">
    <property type="term" value="F:tRNA binding"/>
    <property type="evidence" value="ECO:0007669"/>
    <property type="project" value="UniProtKB-UniRule"/>
</dbReference>
<dbReference type="GO" id="GO:0006412">
    <property type="term" value="P:translation"/>
    <property type="evidence" value="ECO:0007669"/>
    <property type="project" value="UniProtKB-UniRule"/>
</dbReference>
<dbReference type="CDD" id="cd03368">
    <property type="entry name" value="Ribosomal_S12"/>
    <property type="match status" value="1"/>
</dbReference>
<dbReference type="FunFam" id="2.40.50.140:FF:000001">
    <property type="entry name" value="30S ribosomal protein S12"/>
    <property type="match status" value="1"/>
</dbReference>
<dbReference type="Gene3D" id="2.40.50.140">
    <property type="entry name" value="Nucleic acid-binding proteins"/>
    <property type="match status" value="1"/>
</dbReference>
<dbReference type="HAMAP" id="MF_00403_B">
    <property type="entry name" value="Ribosomal_uS12_B"/>
    <property type="match status" value="1"/>
</dbReference>
<dbReference type="InterPro" id="IPR012340">
    <property type="entry name" value="NA-bd_OB-fold"/>
</dbReference>
<dbReference type="InterPro" id="IPR006032">
    <property type="entry name" value="Ribosomal_uS12"/>
</dbReference>
<dbReference type="InterPro" id="IPR005679">
    <property type="entry name" value="Ribosomal_uS12_bac"/>
</dbReference>
<dbReference type="NCBIfam" id="TIGR00981">
    <property type="entry name" value="rpsL_bact"/>
    <property type="match status" value="1"/>
</dbReference>
<dbReference type="PANTHER" id="PTHR11652">
    <property type="entry name" value="30S RIBOSOMAL PROTEIN S12 FAMILY MEMBER"/>
    <property type="match status" value="1"/>
</dbReference>
<dbReference type="Pfam" id="PF00164">
    <property type="entry name" value="Ribosom_S12_S23"/>
    <property type="match status" value="1"/>
</dbReference>
<dbReference type="PIRSF" id="PIRSF002133">
    <property type="entry name" value="Ribosomal_S12/S23"/>
    <property type="match status" value="1"/>
</dbReference>
<dbReference type="PRINTS" id="PR01034">
    <property type="entry name" value="RIBOSOMALS12"/>
</dbReference>
<dbReference type="SUPFAM" id="SSF50249">
    <property type="entry name" value="Nucleic acid-binding proteins"/>
    <property type="match status" value="1"/>
</dbReference>
<dbReference type="PROSITE" id="PS00055">
    <property type="entry name" value="RIBOSOMAL_S12"/>
    <property type="match status" value="1"/>
</dbReference>